<protein>
    <recommendedName>
        <fullName evidence="1">Indole-3-glycerol phosphate synthase</fullName>
        <shortName evidence="1">IGPS</shortName>
        <ecNumber evidence="1">4.1.1.48</ecNumber>
    </recommendedName>
</protein>
<accession>B2HVE7</accession>
<gene>
    <name evidence="1" type="primary">trpC</name>
    <name type="ordered locus">ACICU_02557</name>
</gene>
<comment type="catalytic activity">
    <reaction evidence="1">
        <text>1-(2-carboxyphenylamino)-1-deoxy-D-ribulose 5-phosphate + H(+) = (1S,2R)-1-C-(indol-3-yl)glycerol 3-phosphate + CO2 + H2O</text>
        <dbReference type="Rhea" id="RHEA:23476"/>
        <dbReference type="ChEBI" id="CHEBI:15377"/>
        <dbReference type="ChEBI" id="CHEBI:15378"/>
        <dbReference type="ChEBI" id="CHEBI:16526"/>
        <dbReference type="ChEBI" id="CHEBI:58613"/>
        <dbReference type="ChEBI" id="CHEBI:58866"/>
        <dbReference type="EC" id="4.1.1.48"/>
    </reaction>
</comment>
<comment type="pathway">
    <text evidence="1">Amino-acid biosynthesis; L-tryptophan biosynthesis; L-tryptophan from chorismate: step 4/5.</text>
</comment>
<comment type="similarity">
    <text evidence="1">Belongs to the TrpC family.</text>
</comment>
<proteinExistence type="inferred from homology"/>
<organism>
    <name type="scientific">Acinetobacter baumannii (strain ACICU)</name>
    <dbReference type="NCBI Taxonomy" id="405416"/>
    <lineage>
        <taxon>Bacteria</taxon>
        <taxon>Pseudomonadati</taxon>
        <taxon>Pseudomonadota</taxon>
        <taxon>Gammaproteobacteria</taxon>
        <taxon>Moraxellales</taxon>
        <taxon>Moraxellaceae</taxon>
        <taxon>Acinetobacter</taxon>
        <taxon>Acinetobacter calcoaceticus/baumannii complex</taxon>
    </lineage>
</organism>
<reference key="1">
    <citation type="journal article" date="2008" name="Antimicrob. Agents Chemother.">
        <title>Whole-genome pyrosequencing of an epidemic multidrug-resistant Acinetobacter baumannii strain belonging to the European clone II group.</title>
        <authorList>
            <person name="Iacono M."/>
            <person name="Villa L."/>
            <person name="Fortini D."/>
            <person name="Bordoni R."/>
            <person name="Imperi F."/>
            <person name="Bonnal R.J."/>
            <person name="Sicheritz-Ponten T."/>
            <person name="De Bellis G."/>
            <person name="Visca P."/>
            <person name="Cassone A."/>
            <person name="Carattoli A."/>
        </authorList>
    </citation>
    <scope>NUCLEOTIDE SEQUENCE [LARGE SCALE GENOMIC DNA]</scope>
    <source>
        <strain>ACICU</strain>
    </source>
</reference>
<evidence type="ECO:0000255" key="1">
    <source>
        <dbReference type="HAMAP-Rule" id="MF_00134"/>
    </source>
</evidence>
<feature type="chain" id="PRO_1000095843" description="Indole-3-glycerol phosphate synthase">
    <location>
        <begin position="1"/>
        <end position="268"/>
    </location>
</feature>
<keyword id="KW-0028">Amino-acid biosynthesis</keyword>
<keyword id="KW-0057">Aromatic amino acid biosynthesis</keyword>
<keyword id="KW-0210">Decarboxylase</keyword>
<keyword id="KW-0456">Lyase</keyword>
<keyword id="KW-0822">Tryptophan biosynthesis</keyword>
<name>TRPC_ACIBC</name>
<dbReference type="EC" id="4.1.1.48" evidence="1"/>
<dbReference type="EMBL" id="CP000863">
    <property type="protein sequence ID" value="ACC57869.1"/>
    <property type="molecule type" value="Genomic_DNA"/>
</dbReference>
<dbReference type="RefSeq" id="WP_000608304.1">
    <property type="nucleotide sequence ID" value="NZ_CP031380.1"/>
</dbReference>
<dbReference type="SMR" id="B2HVE7"/>
<dbReference type="KEGG" id="abc:ACICU_02557"/>
<dbReference type="HOGENOM" id="CLU_034247_2_0_6"/>
<dbReference type="UniPathway" id="UPA00035">
    <property type="reaction ID" value="UER00043"/>
</dbReference>
<dbReference type="Proteomes" id="UP000008839">
    <property type="component" value="Chromosome"/>
</dbReference>
<dbReference type="GO" id="GO:0004425">
    <property type="term" value="F:indole-3-glycerol-phosphate synthase activity"/>
    <property type="evidence" value="ECO:0007669"/>
    <property type="project" value="UniProtKB-UniRule"/>
</dbReference>
<dbReference type="GO" id="GO:0004640">
    <property type="term" value="F:phosphoribosylanthranilate isomerase activity"/>
    <property type="evidence" value="ECO:0007669"/>
    <property type="project" value="TreeGrafter"/>
</dbReference>
<dbReference type="GO" id="GO:0000162">
    <property type="term" value="P:L-tryptophan biosynthetic process"/>
    <property type="evidence" value="ECO:0007669"/>
    <property type="project" value="UniProtKB-UniRule"/>
</dbReference>
<dbReference type="CDD" id="cd00331">
    <property type="entry name" value="IGPS"/>
    <property type="match status" value="1"/>
</dbReference>
<dbReference type="FunFam" id="3.20.20.70:FF:000024">
    <property type="entry name" value="Indole-3-glycerol phosphate synthase"/>
    <property type="match status" value="1"/>
</dbReference>
<dbReference type="Gene3D" id="3.20.20.70">
    <property type="entry name" value="Aldolase class I"/>
    <property type="match status" value="1"/>
</dbReference>
<dbReference type="HAMAP" id="MF_00134_B">
    <property type="entry name" value="IGPS_B"/>
    <property type="match status" value="1"/>
</dbReference>
<dbReference type="InterPro" id="IPR013785">
    <property type="entry name" value="Aldolase_TIM"/>
</dbReference>
<dbReference type="InterPro" id="IPR045186">
    <property type="entry name" value="Indole-3-glycerol_P_synth"/>
</dbReference>
<dbReference type="InterPro" id="IPR013798">
    <property type="entry name" value="Indole-3-glycerol_P_synth_dom"/>
</dbReference>
<dbReference type="InterPro" id="IPR001468">
    <property type="entry name" value="Indole-3-GlycerolPSynthase_CS"/>
</dbReference>
<dbReference type="InterPro" id="IPR011060">
    <property type="entry name" value="RibuloseP-bd_barrel"/>
</dbReference>
<dbReference type="NCBIfam" id="NF001373">
    <property type="entry name" value="PRK00278.1-6"/>
    <property type="match status" value="1"/>
</dbReference>
<dbReference type="NCBIfam" id="NF001377">
    <property type="entry name" value="PRK00278.2-4"/>
    <property type="match status" value="1"/>
</dbReference>
<dbReference type="PANTHER" id="PTHR22854:SF2">
    <property type="entry name" value="INDOLE-3-GLYCEROL-PHOSPHATE SYNTHASE"/>
    <property type="match status" value="1"/>
</dbReference>
<dbReference type="PANTHER" id="PTHR22854">
    <property type="entry name" value="TRYPTOPHAN BIOSYNTHESIS PROTEIN"/>
    <property type="match status" value="1"/>
</dbReference>
<dbReference type="Pfam" id="PF00218">
    <property type="entry name" value="IGPS"/>
    <property type="match status" value="1"/>
</dbReference>
<dbReference type="SUPFAM" id="SSF51366">
    <property type="entry name" value="Ribulose-phoshate binding barrel"/>
    <property type="match status" value="1"/>
</dbReference>
<dbReference type="PROSITE" id="PS00614">
    <property type="entry name" value="IGPS"/>
    <property type="match status" value="1"/>
</dbReference>
<sequence length="268" mass="29912">MINIQNTILGKIVDRKHEELAARLKQRNLQDVEELAKAATPVRGFANALQHKRPGVIAEIKKASPSKGIIRADFNPAEIAEQYEQAGAACLSVLTDVDFFQGADENIAIARNHCALPALRKDFLVDPYNVVEARALHADCILLIVACLSDQQLEEMSKTAFEHQLDVLVEVHDEEELERALKLSEQCLLGVNNRNLKTFDVDLNTTIRLKKLLPASRLLITESGIATPDDVRMMQEHDIHSFLVGESFMKQPRPDQAFTALFGQPQTV</sequence>